<comment type="function">
    <text evidence="5">Interferon-stimulated protein that plays a role in innate immunity. Strongly inhibits ebolavirus transcription and replication. Forms a complex with viral RNA-bound nucleocapsid NP and thereby prevents the transport of NP to the cell surface.</text>
</comment>
<comment type="subunit">
    <text evidence="3">Interacts with CEP164.</text>
</comment>
<comment type="subunit">
    <text evidence="5">(Microbial infection) Interacts with ebolavirus protein NP; this interaction sequesters NP in the cytoplasm.</text>
</comment>
<comment type="interaction">
    <interactant intactId="EBI-719994">
        <id>Q53HC0</id>
    </interactant>
    <interactant intactId="EBI-719994">
        <id>Q53HC0</id>
        <label>CCDC92</label>
    </interactant>
    <organismsDiffer>false</organismsDiffer>
    <experiments>3</experiments>
</comment>
<comment type="interaction">
    <interactant intactId="EBI-719994">
        <id>Q53HC0</id>
    </interactant>
    <interactant intactId="EBI-3937015">
        <id>Q9UPV0</id>
        <label>CEP164</label>
    </interactant>
    <organismsDiffer>false</organismsDiffer>
    <experiments>5</experiments>
</comment>
<comment type="interaction">
    <interactant intactId="EBI-719994">
        <id>Q53HC0</id>
    </interactant>
    <interactant intactId="EBI-742887">
        <id>Q8TAP6</id>
        <label>CEP76</label>
    </interactant>
    <organismsDiffer>false</organismsDiffer>
    <experiments>3</experiments>
</comment>
<comment type="interaction">
    <interactant intactId="EBI-719994">
        <id>Q53HC0</id>
    </interactant>
    <interactant intactId="EBI-11988027">
        <id>Q9NRI5-2</id>
        <label>DISC1</label>
    </interactant>
    <organismsDiffer>false</organismsDiffer>
    <experiments>3</experiments>
</comment>
<comment type="interaction">
    <interactant intactId="EBI-719994">
        <id>Q53HC0</id>
    </interactant>
    <interactant intactId="EBI-701903">
        <id>Q14192</id>
        <label>FHL2</label>
    </interactant>
    <organismsDiffer>false</organismsDiffer>
    <experiments>10</experiments>
</comment>
<comment type="interaction">
    <interactant intactId="EBI-719994">
        <id>Q53HC0</id>
    </interactant>
    <interactant intactId="EBI-10175039">
        <id>Q13625-3</id>
        <label>TP53BP2</label>
    </interactant>
    <organismsDiffer>false</organismsDiffer>
    <experiments>3</experiments>
</comment>
<comment type="interaction">
    <interactant intactId="EBI-719994">
        <id>Q53HC0</id>
    </interactant>
    <interactant intactId="EBI-719493">
        <id>P14373</id>
        <label>TRIM27</label>
    </interactant>
    <organismsDiffer>false</organismsDiffer>
    <experiments>3</experiments>
</comment>
<comment type="interaction">
    <interactant intactId="EBI-719994">
        <id>Q53HC0</id>
    </interactant>
    <interactant intactId="EBI-11059915">
        <id>Q8N7C3</id>
        <label>TRIML2</label>
    </interactant>
    <organismsDiffer>false</organismsDiffer>
    <experiments>7</experiments>
</comment>
<comment type="interaction">
    <interactant intactId="EBI-719994">
        <id>Q53HC0</id>
    </interactant>
    <interactant intactId="EBI-9675698">
        <id>P14079</id>
        <label>tax</label>
    </interactant>
    <organismsDiffer>true</organismsDiffer>
    <experiments>3</experiments>
</comment>
<comment type="subcellular location">
    <subcellularLocation>
        <location evidence="3">Cytoplasm</location>
        <location evidence="3">Cytoskeleton</location>
        <location evidence="3">Microtubule organizing center</location>
        <location evidence="3">Centrosome</location>
        <location evidence="3">Centriole</location>
    </subcellularLocation>
    <subcellularLocation>
        <location evidence="5">Cytoplasm</location>
    </subcellularLocation>
</comment>
<comment type="alternative products">
    <event type="alternative splicing"/>
    <isoform>
        <id>Q53HC0-1</id>
        <name>1</name>
        <sequence type="displayed"/>
    </isoform>
    <isoform>
        <id>Q53HC0-2</id>
        <name>2</name>
        <sequence type="described" ref="VSP_056906"/>
    </isoform>
</comment>
<comment type="induction">
    <text evidence="5">Up to threefold after interferon treatment.</text>
</comment>
<comment type="PTM">
    <text evidence="4">Phosphorylated at Ser-209 by TTBK2.</text>
</comment>
<comment type="caution">
    <text evidence="8">It is uncertain whether Met-1 or Met-18 is the initiator.</text>
</comment>
<comment type="sequence caution" evidence="8">
    <conflict type="erroneous initiation">
        <sequence resource="EMBL-CDS" id="BAD96381"/>
    </conflict>
</comment>
<sequence>MTSPHFSSYDEGPLDVSMAATNLENQLHSAQKNLLFLQREHASTLKGLHSEIRRLQQHCTDLTYELTVKSSEQTGDGTSKSSELKKRCEELEAQLKVKENENAELLKELEQKNAMITVLENTIKEREKKYLEELKAKSHKLTLLSSELEQRASTIAYLTSQLHAAKKKLMSSSGTSDASPSGSPVLASYKPAPPKDKLPETPRRRMKKSLSAPLHPEFEEVYRFGAESRKLLLREPVDAMPDPTPFLLARESAEVHLIKERPLVIPPIASDRSGEQHSPAREKPHKAHVGVAHRIHHATPPQAQPEVKTLAVDQVNGGKVVRKHSGTDRTV</sequence>
<gene>
    <name type="primary">CCDC92</name>
</gene>
<evidence type="ECO:0000255" key="1"/>
<evidence type="ECO:0000256" key="2">
    <source>
        <dbReference type="SAM" id="MobiDB-lite"/>
    </source>
</evidence>
<evidence type="ECO:0000269" key="3">
    <source>
    </source>
</evidence>
<evidence type="ECO:0000269" key="4">
    <source>
    </source>
</evidence>
<evidence type="ECO:0000269" key="5">
    <source>
    </source>
</evidence>
<evidence type="ECO:0000269" key="6">
    <source ref="3"/>
</evidence>
<evidence type="ECO:0000303" key="7">
    <source>
    </source>
</evidence>
<evidence type="ECO:0000305" key="8"/>
<name>CCD92_HUMAN</name>
<keyword id="KW-0025">Alternative splicing</keyword>
<keyword id="KW-0930">Antiviral protein</keyword>
<keyword id="KW-0175">Coiled coil</keyword>
<keyword id="KW-0963">Cytoplasm</keyword>
<keyword id="KW-0206">Cytoskeleton</keyword>
<keyword id="KW-0945">Host-virus interaction</keyword>
<keyword id="KW-0391">Immunity</keyword>
<keyword id="KW-0399">Innate immunity</keyword>
<keyword id="KW-0597">Phosphoprotein</keyword>
<keyword id="KW-1267">Proteomics identification</keyword>
<keyword id="KW-1185">Reference proteome</keyword>
<dbReference type="EMBL" id="AB015292">
    <property type="protein sequence ID" value="BAB82436.1"/>
    <property type="molecule type" value="mRNA"/>
</dbReference>
<dbReference type="EMBL" id="AK026124">
    <property type="protein sequence ID" value="BAB15366.1"/>
    <property type="molecule type" value="mRNA"/>
</dbReference>
<dbReference type="EMBL" id="AK054680">
    <property type="protein sequence ID" value="BAG51412.1"/>
    <property type="molecule type" value="mRNA"/>
</dbReference>
<dbReference type="EMBL" id="AK125866">
    <property type="protein sequence ID" value="BAG54259.1"/>
    <property type="molecule type" value="mRNA"/>
</dbReference>
<dbReference type="EMBL" id="AK222661">
    <property type="protein sequence ID" value="BAD96381.1"/>
    <property type="status" value="ALT_INIT"/>
    <property type="molecule type" value="mRNA"/>
</dbReference>
<dbReference type="EMBL" id="AC068790">
    <property type="status" value="NOT_ANNOTATED_CDS"/>
    <property type="molecule type" value="Genomic_DNA"/>
</dbReference>
<dbReference type="EMBL" id="AC079315">
    <property type="status" value="NOT_ANNOTATED_CDS"/>
    <property type="molecule type" value="Genomic_DNA"/>
</dbReference>
<dbReference type="EMBL" id="BC017186">
    <property type="protein sequence ID" value="AAH17186.1"/>
    <property type="molecule type" value="mRNA"/>
</dbReference>
<dbReference type="CCDS" id="CCDS76619.1">
    <molecule id="Q53HC0-2"/>
</dbReference>
<dbReference type="CCDS" id="CCDS9256.1">
    <molecule id="Q53HC0-1"/>
</dbReference>
<dbReference type="RefSeq" id="NP_001291886.1">
    <molecule id="Q53HC0-1"/>
    <property type="nucleotide sequence ID" value="NM_001304957.2"/>
</dbReference>
<dbReference type="RefSeq" id="NP_001291887.1">
    <molecule id="Q53HC0-1"/>
    <property type="nucleotide sequence ID" value="NM_001304958.2"/>
</dbReference>
<dbReference type="RefSeq" id="NP_001291888.1">
    <molecule id="Q53HC0-1"/>
    <property type="nucleotide sequence ID" value="NM_001304959.2"/>
</dbReference>
<dbReference type="RefSeq" id="NP_001291889.1">
    <molecule id="Q53HC0-1"/>
    <property type="nucleotide sequence ID" value="NM_001304960.2"/>
</dbReference>
<dbReference type="RefSeq" id="NP_001291890.1">
    <molecule id="Q53HC0-2"/>
    <property type="nucleotide sequence ID" value="NM_001304961.2"/>
</dbReference>
<dbReference type="RefSeq" id="NP_079416.1">
    <molecule id="Q53HC0-1"/>
    <property type="nucleotide sequence ID" value="NM_025140.3"/>
</dbReference>
<dbReference type="RefSeq" id="XP_005253681.1">
    <molecule id="Q53HC0-1"/>
    <property type="nucleotide sequence ID" value="XM_005253624.3"/>
</dbReference>
<dbReference type="RefSeq" id="XP_016875473.1">
    <property type="nucleotide sequence ID" value="XM_017019984.1"/>
</dbReference>
<dbReference type="RefSeq" id="XP_024304960.1">
    <molecule id="Q53HC0-1"/>
    <property type="nucleotide sequence ID" value="XM_024449192.2"/>
</dbReference>
<dbReference type="RefSeq" id="XP_024304961.1">
    <molecule id="Q53HC0-1"/>
    <property type="nucleotide sequence ID" value="XM_024449193.2"/>
</dbReference>
<dbReference type="RefSeq" id="XP_024304962.1">
    <molecule id="Q53HC0-1"/>
    <property type="nucleotide sequence ID" value="XM_024449194.2"/>
</dbReference>
<dbReference type="RefSeq" id="XP_024304964.1">
    <molecule id="Q53HC0-1"/>
    <property type="nucleotide sequence ID" value="XM_024449196.2"/>
</dbReference>
<dbReference type="RefSeq" id="XP_024304965.1">
    <molecule id="Q53HC0-1"/>
    <property type="nucleotide sequence ID" value="XM_024449197.2"/>
</dbReference>
<dbReference type="RefSeq" id="XP_024304967.1">
    <molecule id="Q53HC0-1"/>
    <property type="nucleotide sequence ID" value="XM_024449199.2"/>
</dbReference>
<dbReference type="RefSeq" id="XP_047285521.1">
    <molecule id="Q53HC0-1"/>
    <property type="nucleotide sequence ID" value="XM_047429565.1"/>
</dbReference>
<dbReference type="RefSeq" id="XP_047285522.1">
    <molecule id="Q53HC0-1"/>
    <property type="nucleotide sequence ID" value="XM_047429566.1"/>
</dbReference>
<dbReference type="RefSeq" id="XP_047285523.1">
    <molecule id="Q53HC0-1"/>
    <property type="nucleotide sequence ID" value="XM_047429567.1"/>
</dbReference>
<dbReference type="RefSeq" id="XP_054229258.1">
    <molecule id="Q53HC0-1"/>
    <property type="nucleotide sequence ID" value="XM_054373283.1"/>
</dbReference>
<dbReference type="RefSeq" id="XP_054229259.1">
    <molecule id="Q53HC0-1"/>
    <property type="nucleotide sequence ID" value="XM_054373284.1"/>
</dbReference>
<dbReference type="RefSeq" id="XP_054229260.1">
    <molecule id="Q53HC0-1"/>
    <property type="nucleotide sequence ID" value="XM_054373285.1"/>
</dbReference>
<dbReference type="RefSeq" id="XP_054229261.1">
    <molecule id="Q53HC0-1"/>
    <property type="nucleotide sequence ID" value="XM_054373286.1"/>
</dbReference>
<dbReference type="RefSeq" id="XP_054229262.1">
    <molecule id="Q53HC0-1"/>
    <property type="nucleotide sequence ID" value="XM_054373287.1"/>
</dbReference>
<dbReference type="RefSeq" id="XP_054229263.1">
    <molecule id="Q53HC0-1"/>
    <property type="nucleotide sequence ID" value="XM_054373288.1"/>
</dbReference>
<dbReference type="SMR" id="Q53HC0"/>
<dbReference type="BioGRID" id="123180">
    <property type="interactions" value="58"/>
</dbReference>
<dbReference type="CORUM" id="Q53HC0"/>
<dbReference type="FunCoup" id="Q53HC0">
    <property type="interactions" value="861"/>
</dbReference>
<dbReference type="IntAct" id="Q53HC0">
    <property type="interactions" value="54"/>
</dbReference>
<dbReference type="MINT" id="Q53HC0"/>
<dbReference type="STRING" id="9606.ENSP00000238156"/>
<dbReference type="GlyGen" id="Q53HC0">
    <property type="glycosylation" value="1 site"/>
</dbReference>
<dbReference type="iPTMnet" id="Q53HC0"/>
<dbReference type="PhosphoSitePlus" id="Q53HC0"/>
<dbReference type="BioMuta" id="CCDC92"/>
<dbReference type="DMDM" id="125863297"/>
<dbReference type="jPOST" id="Q53HC0"/>
<dbReference type="MassIVE" id="Q53HC0"/>
<dbReference type="PaxDb" id="9606-ENSP00000238156"/>
<dbReference type="PeptideAtlas" id="Q53HC0"/>
<dbReference type="ProteomicsDB" id="3505"/>
<dbReference type="ProteomicsDB" id="62503">
    <molecule id="Q53HC0-1"/>
</dbReference>
<dbReference type="Pumba" id="Q53HC0"/>
<dbReference type="Antibodypedia" id="52615">
    <property type="antibodies" value="117 antibodies from 20 providers"/>
</dbReference>
<dbReference type="DNASU" id="80212"/>
<dbReference type="Ensembl" id="ENST00000238156.8">
    <molecule id="Q53HC0-1"/>
    <property type="protein sequence ID" value="ENSP00000238156.3"/>
    <property type="gene ID" value="ENSG00000119242.9"/>
</dbReference>
<dbReference type="Ensembl" id="ENST00000545135.5">
    <molecule id="Q53HC0-2"/>
    <property type="protein sequence ID" value="ENSP00000439526.1"/>
    <property type="gene ID" value="ENSG00000119242.9"/>
</dbReference>
<dbReference type="Ensembl" id="ENST00000545891.5">
    <molecule id="Q53HC0-2"/>
    <property type="protein sequence ID" value="ENSP00000440024.1"/>
    <property type="gene ID" value="ENSG00000119242.9"/>
</dbReference>
<dbReference type="Ensembl" id="ENST00000614047.2">
    <molecule id="Q53HC0-2"/>
    <property type="protein sequence ID" value="ENSP00000479437.2"/>
    <property type="gene ID" value="ENSG00000275035.2"/>
</dbReference>
<dbReference type="Ensembl" id="ENST00000631749.1">
    <molecule id="Q53HC0-2"/>
    <property type="protein sequence ID" value="ENSP00000487695.1"/>
    <property type="gene ID" value="ENSG00000275035.2"/>
</dbReference>
<dbReference type="Ensembl" id="ENST00000632401.1">
    <molecule id="Q53HC0-1"/>
    <property type="protein sequence ID" value="ENSP00000488830.1"/>
    <property type="gene ID" value="ENSG00000275035.2"/>
</dbReference>
<dbReference type="GeneID" id="80212"/>
<dbReference type="KEGG" id="hsa:80212"/>
<dbReference type="MANE-Select" id="ENST00000238156.8">
    <property type="protein sequence ID" value="ENSP00000238156.3"/>
    <property type="RefSeq nucleotide sequence ID" value="NM_025140.3"/>
    <property type="RefSeq protein sequence ID" value="NP_079416.1"/>
</dbReference>
<dbReference type="UCSC" id="uc001ufv.2">
    <molecule id="Q53HC0-1"/>
    <property type="organism name" value="human"/>
</dbReference>
<dbReference type="AGR" id="HGNC:29563"/>
<dbReference type="CTD" id="80212"/>
<dbReference type="DisGeNET" id="80212"/>
<dbReference type="GeneCards" id="CCDC92"/>
<dbReference type="HGNC" id="HGNC:29563">
    <property type="gene designation" value="CCDC92"/>
</dbReference>
<dbReference type="HPA" id="ENSG00000119242">
    <property type="expression patterns" value="Tissue enhanced (brain)"/>
</dbReference>
<dbReference type="neXtProt" id="NX_Q53HC0"/>
<dbReference type="OpenTargets" id="ENSG00000119242"/>
<dbReference type="PharmGKB" id="PA144596459"/>
<dbReference type="VEuPathDB" id="HostDB:ENSG00000119242"/>
<dbReference type="eggNOG" id="ENOG502QQWS">
    <property type="taxonomic scope" value="Eukaryota"/>
</dbReference>
<dbReference type="GeneTree" id="ENSGT00430000031027"/>
<dbReference type="HOGENOM" id="CLU_076253_0_0_1"/>
<dbReference type="InParanoid" id="Q53HC0"/>
<dbReference type="OMA" id="AHRIHHG"/>
<dbReference type="OrthoDB" id="2155209at2759"/>
<dbReference type="PAN-GO" id="Q53HC0">
    <property type="GO annotations" value="1 GO annotation based on evolutionary models"/>
</dbReference>
<dbReference type="PhylomeDB" id="Q53HC0"/>
<dbReference type="TreeFam" id="TF329066"/>
<dbReference type="PathwayCommons" id="Q53HC0"/>
<dbReference type="SignaLink" id="Q53HC0"/>
<dbReference type="BioGRID-ORCS" id="80212">
    <property type="hits" value="19 hits in 1165 CRISPR screens"/>
</dbReference>
<dbReference type="ChiTaRS" id="CCDC92">
    <property type="organism name" value="human"/>
</dbReference>
<dbReference type="GenomeRNAi" id="80212"/>
<dbReference type="Pharos" id="Q53HC0">
    <property type="development level" value="Tbio"/>
</dbReference>
<dbReference type="PRO" id="PR:Q53HC0"/>
<dbReference type="Proteomes" id="UP000005640">
    <property type="component" value="Chromosome 12"/>
</dbReference>
<dbReference type="RNAct" id="Q53HC0">
    <property type="molecule type" value="protein"/>
</dbReference>
<dbReference type="Bgee" id="ENSG00000119242">
    <property type="expression patterns" value="Expressed in anterior cingulate cortex and 97 other cell types or tissues"/>
</dbReference>
<dbReference type="ExpressionAtlas" id="Q53HC0">
    <property type="expression patterns" value="baseline and differential"/>
</dbReference>
<dbReference type="GO" id="GO:0005814">
    <property type="term" value="C:centriole"/>
    <property type="evidence" value="ECO:0000314"/>
    <property type="project" value="UniProtKB"/>
</dbReference>
<dbReference type="GO" id="GO:0005813">
    <property type="term" value="C:centrosome"/>
    <property type="evidence" value="ECO:0000314"/>
    <property type="project" value="HPA"/>
</dbReference>
<dbReference type="GO" id="GO:0005737">
    <property type="term" value="C:cytoplasm"/>
    <property type="evidence" value="ECO:0007669"/>
    <property type="project" value="UniProtKB-SubCell"/>
</dbReference>
<dbReference type="GO" id="GO:0043231">
    <property type="term" value="C:intracellular membrane-bounded organelle"/>
    <property type="evidence" value="ECO:0000314"/>
    <property type="project" value="HPA"/>
</dbReference>
<dbReference type="GO" id="GO:0005654">
    <property type="term" value="C:nucleoplasm"/>
    <property type="evidence" value="ECO:0000314"/>
    <property type="project" value="HPA"/>
</dbReference>
<dbReference type="GO" id="GO:0042802">
    <property type="term" value="F:identical protein binding"/>
    <property type="evidence" value="ECO:0000353"/>
    <property type="project" value="IntAct"/>
</dbReference>
<dbReference type="GO" id="GO:0045087">
    <property type="term" value="P:innate immune response"/>
    <property type="evidence" value="ECO:0007669"/>
    <property type="project" value="UniProtKB-KW"/>
</dbReference>
<dbReference type="GO" id="GO:0050688">
    <property type="term" value="P:regulation of defense response to virus"/>
    <property type="evidence" value="ECO:0007669"/>
    <property type="project" value="UniProtKB-KW"/>
</dbReference>
<dbReference type="InterPro" id="IPR040370">
    <property type="entry name" value="CCDC74A/CCDC74B/CCDC92"/>
</dbReference>
<dbReference type="InterPro" id="IPR039496">
    <property type="entry name" value="CCDC92/74_N"/>
</dbReference>
<dbReference type="PANTHER" id="PTHR14882">
    <property type="entry name" value="COILED-COIL DOMAIN-CONTAINING 74A"/>
    <property type="match status" value="1"/>
</dbReference>
<dbReference type="PANTHER" id="PTHR14882:SF4">
    <property type="entry name" value="COILED-COIL DOMAIN-CONTAINING PROTEIN 92"/>
    <property type="match status" value="1"/>
</dbReference>
<dbReference type="Pfam" id="PF14916">
    <property type="entry name" value="CCDC92"/>
    <property type="match status" value="1"/>
</dbReference>
<accession>Q53HC0</accession>
<accession>B3KNQ0</accession>
<accession>Q9H697</accession>
<reference key="1">
    <citation type="submission" date="1998-06" db="EMBL/GenBank/DDBJ databases">
        <title>Limkain beta 2 associates with the LIM domain of LIM kinase 2 and localizes in the nucleus.</title>
        <authorList>
            <person name="Miyamoto K."/>
            <person name="Sumi T."/>
            <person name="Nakamura T."/>
        </authorList>
    </citation>
    <scope>NUCLEOTIDE SEQUENCE [MRNA] (ISOFORM 1)</scope>
    <source>
        <tissue>Liver</tissue>
    </source>
</reference>
<reference key="2">
    <citation type="journal article" date="2004" name="Nat. Genet.">
        <title>Complete sequencing and characterization of 21,243 full-length human cDNAs.</title>
        <authorList>
            <person name="Ota T."/>
            <person name="Suzuki Y."/>
            <person name="Nishikawa T."/>
            <person name="Otsuki T."/>
            <person name="Sugiyama T."/>
            <person name="Irie R."/>
            <person name="Wakamatsu A."/>
            <person name="Hayashi K."/>
            <person name="Sato H."/>
            <person name="Nagai K."/>
            <person name="Kimura K."/>
            <person name="Makita H."/>
            <person name="Sekine M."/>
            <person name="Obayashi M."/>
            <person name="Nishi T."/>
            <person name="Shibahara T."/>
            <person name="Tanaka T."/>
            <person name="Ishii S."/>
            <person name="Yamamoto J."/>
            <person name="Saito K."/>
            <person name="Kawai Y."/>
            <person name="Isono Y."/>
            <person name="Nakamura Y."/>
            <person name="Nagahari K."/>
            <person name="Murakami K."/>
            <person name="Yasuda T."/>
            <person name="Iwayanagi T."/>
            <person name="Wagatsuma M."/>
            <person name="Shiratori A."/>
            <person name="Sudo H."/>
            <person name="Hosoiri T."/>
            <person name="Kaku Y."/>
            <person name="Kodaira H."/>
            <person name="Kondo H."/>
            <person name="Sugawara M."/>
            <person name="Takahashi M."/>
            <person name="Kanda K."/>
            <person name="Yokoi T."/>
            <person name="Furuya T."/>
            <person name="Kikkawa E."/>
            <person name="Omura Y."/>
            <person name="Abe K."/>
            <person name="Kamihara K."/>
            <person name="Katsuta N."/>
            <person name="Sato K."/>
            <person name="Tanikawa M."/>
            <person name="Yamazaki M."/>
            <person name="Ninomiya K."/>
            <person name="Ishibashi T."/>
            <person name="Yamashita H."/>
            <person name="Murakawa K."/>
            <person name="Fujimori K."/>
            <person name="Tanai H."/>
            <person name="Kimata M."/>
            <person name="Watanabe M."/>
            <person name="Hiraoka S."/>
            <person name="Chiba Y."/>
            <person name="Ishida S."/>
            <person name="Ono Y."/>
            <person name="Takiguchi S."/>
            <person name="Watanabe S."/>
            <person name="Yosida M."/>
            <person name="Hotuta T."/>
            <person name="Kusano J."/>
            <person name="Kanehori K."/>
            <person name="Takahashi-Fujii A."/>
            <person name="Hara H."/>
            <person name="Tanase T.-O."/>
            <person name="Nomura Y."/>
            <person name="Togiya S."/>
            <person name="Komai F."/>
            <person name="Hara R."/>
            <person name="Takeuchi K."/>
            <person name="Arita M."/>
            <person name="Imose N."/>
            <person name="Musashino K."/>
            <person name="Yuuki H."/>
            <person name="Oshima A."/>
            <person name="Sasaki N."/>
            <person name="Aotsuka S."/>
            <person name="Yoshikawa Y."/>
            <person name="Matsunawa H."/>
            <person name="Ichihara T."/>
            <person name="Shiohata N."/>
            <person name="Sano S."/>
            <person name="Moriya S."/>
            <person name="Momiyama H."/>
            <person name="Satoh N."/>
            <person name="Takami S."/>
            <person name="Terashima Y."/>
            <person name="Suzuki O."/>
            <person name="Nakagawa S."/>
            <person name="Senoh A."/>
            <person name="Mizoguchi H."/>
            <person name="Goto Y."/>
            <person name="Shimizu F."/>
            <person name="Wakebe H."/>
            <person name="Hishigaki H."/>
            <person name="Watanabe T."/>
            <person name="Sugiyama A."/>
            <person name="Takemoto M."/>
            <person name="Kawakami B."/>
            <person name="Yamazaki M."/>
            <person name="Watanabe K."/>
            <person name="Kumagai A."/>
            <person name="Itakura S."/>
            <person name="Fukuzumi Y."/>
            <person name="Fujimori Y."/>
            <person name="Komiyama M."/>
            <person name="Tashiro H."/>
            <person name="Tanigami A."/>
            <person name="Fujiwara T."/>
            <person name="Ono T."/>
            <person name="Yamada K."/>
            <person name="Fujii Y."/>
            <person name="Ozaki K."/>
            <person name="Hirao M."/>
            <person name="Ohmori Y."/>
            <person name="Kawabata A."/>
            <person name="Hikiji T."/>
            <person name="Kobatake N."/>
            <person name="Inagaki H."/>
            <person name="Ikema Y."/>
            <person name="Okamoto S."/>
            <person name="Okitani R."/>
            <person name="Kawakami T."/>
            <person name="Noguchi S."/>
            <person name="Itoh T."/>
            <person name="Shigeta K."/>
            <person name="Senba T."/>
            <person name="Matsumura K."/>
            <person name="Nakajima Y."/>
            <person name="Mizuno T."/>
            <person name="Morinaga M."/>
            <person name="Sasaki M."/>
            <person name="Togashi T."/>
            <person name="Oyama M."/>
            <person name="Hata H."/>
            <person name="Watanabe M."/>
            <person name="Komatsu T."/>
            <person name="Mizushima-Sugano J."/>
            <person name="Satoh T."/>
            <person name="Shirai Y."/>
            <person name="Takahashi Y."/>
            <person name="Nakagawa K."/>
            <person name="Okumura K."/>
            <person name="Nagase T."/>
            <person name="Nomura N."/>
            <person name="Kikuchi H."/>
            <person name="Masuho Y."/>
            <person name="Yamashita R."/>
            <person name="Nakai K."/>
            <person name="Yada T."/>
            <person name="Nakamura Y."/>
            <person name="Ohara O."/>
            <person name="Isogai T."/>
            <person name="Sugano S."/>
        </authorList>
    </citation>
    <scope>NUCLEOTIDE SEQUENCE [LARGE SCALE MRNA] (ISOFORMS 1 AND 2)</scope>
    <source>
        <tissue>Cerebellum</tissue>
        <tissue>Testis</tissue>
    </source>
</reference>
<reference key="3">
    <citation type="submission" date="2005-04" db="EMBL/GenBank/DDBJ databases">
        <authorList>
            <person name="Suzuki Y."/>
            <person name="Sugano S."/>
            <person name="Totoki Y."/>
            <person name="Toyoda A."/>
            <person name="Takeda T."/>
            <person name="Sakaki Y."/>
            <person name="Tanaka A."/>
            <person name="Yokoyama S."/>
        </authorList>
    </citation>
    <scope>NUCLEOTIDE SEQUENCE [LARGE SCALE MRNA] (ISOFORM 1)</scope>
    <scope>VARIANT THR-253</scope>
    <source>
        <tissue>Brain</tissue>
    </source>
</reference>
<reference key="4">
    <citation type="journal article" date="2006" name="Nature">
        <title>The finished DNA sequence of human chromosome 12.</title>
        <authorList>
            <person name="Scherer S.E."/>
            <person name="Muzny D.M."/>
            <person name="Buhay C.J."/>
            <person name="Chen R."/>
            <person name="Cree A."/>
            <person name="Ding Y."/>
            <person name="Dugan-Rocha S."/>
            <person name="Gill R."/>
            <person name="Gunaratne P."/>
            <person name="Harris R.A."/>
            <person name="Hawes A.C."/>
            <person name="Hernandez J."/>
            <person name="Hodgson A.V."/>
            <person name="Hume J."/>
            <person name="Jackson A."/>
            <person name="Khan Z.M."/>
            <person name="Kovar-Smith C."/>
            <person name="Lewis L.R."/>
            <person name="Lozado R.J."/>
            <person name="Metzker M.L."/>
            <person name="Milosavljevic A."/>
            <person name="Miner G.R."/>
            <person name="Montgomery K.T."/>
            <person name="Morgan M.B."/>
            <person name="Nazareth L.V."/>
            <person name="Scott G."/>
            <person name="Sodergren E."/>
            <person name="Song X.-Z."/>
            <person name="Steffen D."/>
            <person name="Lovering R.C."/>
            <person name="Wheeler D.A."/>
            <person name="Worley K.C."/>
            <person name="Yuan Y."/>
            <person name="Zhang Z."/>
            <person name="Adams C.Q."/>
            <person name="Ansari-Lari M.A."/>
            <person name="Ayele M."/>
            <person name="Brown M.J."/>
            <person name="Chen G."/>
            <person name="Chen Z."/>
            <person name="Clerc-Blankenburg K.P."/>
            <person name="Davis C."/>
            <person name="Delgado O."/>
            <person name="Dinh H.H."/>
            <person name="Draper H."/>
            <person name="Gonzalez-Garay M.L."/>
            <person name="Havlak P."/>
            <person name="Jackson L.R."/>
            <person name="Jacob L.S."/>
            <person name="Kelly S.H."/>
            <person name="Li L."/>
            <person name="Li Z."/>
            <person name="Liu J."/>
            <person name="Liu W."/>
            <person name="Lu J."/>
            <person name="Maheshwari M."/>
            <person name="Nguyen B.-V."/>
            <person name="Okwuonu G.O."/>
            <person name="Pasternak S."/>
            <person name="Perez L.M."/>
            <person name="Plopper F.J.H."/>
            <person name="Santibanez J."/>
            <person name="Shen H."/>
            <person name="Tabor P.E."/>
            <person name="Verduzco D."/>
            <person name="Waldron L."/>
            <person name="Wang Q."/>
            <person name="Williams G.A."/>
            <person name="Zhang J."/>
            <person name="Zhou J."/>
            <person name="Allen C.C."/>
            <person name="Amin A.G."/>
            <person name="Anyalebechi V."/>
            <person name="Bailey M."/>
            <person name="Barbaria J.A."/>
            <person name="Bimage K.E."/>
            <person name="Bryant N.P."/>
            <person name="Burch P.E."/>
            <person name="Burkett C.E."/>
            <person name="Burrell K.L."/>
            <person name="Calderon E."/>
            <person name="Cardenas V."/>
            <person name="Carter K."/>
            <person name="Casias K."/>
            <person name="Cavazos I."/>
            <person name="Cavazos S.R."/>
            <person name="Ceasar H."/>
            <person name="Chacko J."/>
            <person name="Chan S.N."/>
            <person name="Chavez D."/>
            <person name="Christopoulos C."/>
            <person name="Chu J."/>
            <person name="Cockrell R."/>
            <person name="Cox C.D."/>
            <person name="Dang M."/>
            <person name="Dathorne S.R."/>
            <person name="David R."/>
            <person name="Davis C.M."/>
            <person name="Davy-Carroll L."/>
            <person name="Deshazo D.R."/>
            <person name="Donlin J.E."/>
            <person name="D'Souza L."/>
            <person name="Eaves K.A."/>
            <person name="Egan A."/>
            <person name="Emery-Cohen A.J."/>
            <person name="Escotto M."/>
            <person name="Flagg N."/>
            <person name="Forbes L.D."/>
            <person name="Gabisi A.M."/>
            <person name="Garza M."/>
            <person name="Hamilton C."/>
            <person name="Henderson N."/>
            <person name="Hernandez O."/>
            <person name="Hines S."/>
            <person name="Hogues M.E."/>
            <person name="Huang M."/>
            <person name="Idlebird D.G."/>
            <person name="Johnson R."/>
            <person name="Jolivet A."/>
            <person name="Jones S."/>
            <person name="Kagan R."/>
            <person name="King L.M."/>
            <person name="Leal B."/>
            <person name="Lebow H."/>
            <person name="Lee S."/>
            <person name="LeVan J.M."/>
            <person name="Lewis L.C."/>
            <person name="London P."/>
            <person name="Lorensuhewa L.M."/>
            <person name="Loulseged H."/>
            <person name="Lovett D.A."/>
            <person name="Lucier A."/>
            <person name="Lucier R.L."/>
            <person name="Ma J."/>
            <person name="Madu R.C."/>
            <person name="Mapua P."/>
            <person name="Martindale A.D."/>
            <person name="Martinez E."/>
            <person name="Massey E."/>
            <person name="Mawhiney S."/>
            <person name="Meador M.G."/>
            <person name="Mendez S."/>
            <person name="Mercado C."/>
            <person name="Mercado I.C."/>
            <person name="Merritt C.E."/>
            <person name="Miner Z.L."/>
            <person name="Minja E."/>
            <person name="Mitchell T."/>
            <person name="Mohabbat F."/>
            <person name="Mohabbat K."/>
            <person name="Montgomery B."/>
            <person name="Moore N."/>
            <person name="Morris S."/>
            <person name="Munidasa M."/>
            <person name="Ngo R.N."/>
            <person name="Nguyen N.B."/>
            <person name="Nickerson E."/>
            <person name="Nwaokelemeh O.O."/>
            <person name="Nwokenkwo S."/>
            <person name="Obregon M."/>
            <person name="Oguh M."/>
            <person name="Oragunye N."/>
            <person name="Oviedo R.J."/>
            <person name="Parish B.J."/>
            <person name="Parker D.N."/>
            <person name="Parrish J."/>
            <person name="Parks K.L."/>
            <person name="Paul H.A."/>
            <person name="Payton B.A."/>
            <person name="Perez A."/>
            <person name="Perrin W."/>
            <person name="Pickens A."/>
            <person name="Primus E.L."/>
            <person name="Pu L.-L."/>
            <person name="Puazo M."/>
            <person name="Quiles M.M."/>
            <person name="Quiroz J.B."/>
            <person name="Rabata D."/>
            <person name="Reeves K."/>
            <person name="Ruiz S.J."/>
            <person name="Shao H."/>
            <person name="Sisson I."/>
            <person name="Sonaike T."/>
            <person name="Sorelle R.P."/>
            <person name="Sutton A.E."/>
            <person name="Svatek A.F."/>
            <person name="Svetz L.A."/>
            <person name="Tamerisa K.S."/>
            <person name="Taylor T.R."/>
            <person name="Teague B."/>
            <person name="Thomas N."/>
            <person name="Thorn R.D."/>
            <person name="Trejos Z.Y."/>
            <person name="Trevino B.K."/>
            <person name="Ukegbu O.N."/>
            <person name="Urban J.B."/>
            <person name="Vasquez L.I."/>
            <person name="Vera V.A."/>
            <person name="Villasana D.M."/>
            <person name="Wang L."/>
            <person name="Ward-Moore S."/>
            <person name="Warren J.T."/>
            <person name="Wei X."/>
            <person name="White F."/>
            <person name="Williamson A.L."/>
            <person name="Wleczyk R."/>
            <person name="Wooden H.S."/>
            <person name="Wooden S.H."/>
            <person name="Yen J."/>
            <person name="Yoon L."/>
            <person name="Yoon V."/>
            <person name="Zorrilla S.E."/>
            <person name="Nelson D."/>
            <person name="Kucherlapati R."/>
            <person name="Weinstock G."/>
            <person name="Gibbs R.A."/>
        </authorList>
    </citation>
    <scope>NUCLEOTIDE SEQUENCE [LARGE SCALE GENOMIC DNA]</scope>
</reference>
<reference key="5">
    <citation type="journal article" date="2004" name="Genome Res.">
        <title>The status, quality, and expansion of the NIH full-length cDNA project: the Mammalian Gene Collection (MGC).</title>
        <authorList>
            <consortium name="The MGC Project Team"/>
        </authorList>
    </citation>
    <scope>NUCLEOTIDE SEQUENCE [LARGE SCALE MRNA] (ISOFORM 1)</scope>
    <source>
        <tissue>Colon</tissue>
    </source>
</reference>
<reference key="6">
    <citation type="journal article" date="2012" name="Cell">
        <title>Exome capture reveals ZNF423 and CEP164 mutations, linking renal ciliopathies to DNA damage response signaling.</title>
        <authorList>
            <person name="Chaki M."/>
            <person name="Airik R."/>
            <person name="Ghosh A.K."/>
            <person name="Giles R.H."/>
            <person name="Chen R."/>
            <person name="Slaats G.G."/>
            <person name="Wang H."/>
            <person name="Hurd T.W."/>
            <person name="Zhou W."/>
            <person name="Cluckey A."/>
            <person name="Gee H.Y."/>
            <person name="Ramaswami G."/>
            <person name="Hong C.J."/>
            <person name="Hamilton B.A."/>
            <person name="Cervenka I."/>
            <person name="Ganji R.S."/>
            <person name="Bryja V."/>
            <person name="Arts H.H."/>
            <person name="van Reeuwijk J."/>
            <person name="Oud M.M."/>
            <person name="Letteboer S.J."/>
            <person name="Roepman R."/>
            <person name="Husson H."/>
            <person name="Ibraghimov-Beskrovnaya O."/>
            <person name="Yasunaga T."/>
            <person name="Walz G."/>
            <person name="Eley L."/>
            <person name="Sayer J.A."/>
            <person name="Schermer B."/>
            <person name="Liebau M.C."/>
            <person name="Benzing T."/>
            <person name="Le Corre S."/>
            <person name="Drummond I."/>
            <person name="Janssen S."/>
            <person name="Allen S.J."/>
            <person name="Natarajan S."/>
            <person name="O'Toole J.F."/>
            <person name="Attanasio M."/>
            <person name="Saunier S."/>
            <person name="Antignac C."/>
            <person name="Koenekoop R.K."/>
            <person name="Ren H."/>
            <person name="Lopez I."/>
            <person name="Nayir A."/>
            <person name="Stoetzel C."/>
            <person name="Dollfus H."/>
            <person name="Massoudi R."/>
            <person name="Gleeson J.G."/>
            <person name="Andreoli S.P."/>
            <person name="Doherty D.G."/>
            <person name="Lindstrad A."/>
            <person name="Golzio C."/>
            <person name="Katsanis N."/>
            <person name="Pape L."/>
            <person name="Abboud E.B."/>
            <person name="Al-Rajhi A.A."/>
            <person name="Lewis R.A."/>
            <person name="Omran H."/>
            <person name="Lee E.Y."/>
            <person name="Wang S."/>
            <person name="Sekiguchi J.M."/>
            <person name="Saunders R."/>
            <person name="Johnson C.A."/>
            <person name="Garner E."/>
            <person name="Vanselow K."/>
            <person name="Andersen J.S."/>
            <person name="Shlomai J."/>
            <person name="Nurnberg G."/>
            <person name="Nurnberg P."/>
            <person name="Levy S."/>
            <person name="Smogorzewska A."/>
            <person name="Otto E.A."/>
            <person name="Hildebrandt F."/>
        </authorList>
    </citation>
    <scope>INTERACTION WITH CEP164</scope>
    <scope>SUBCELLULAR LOCATION</scope>
</reference>
<reference key="7">
    <citation type="journal article" date="2014" name="J. Proteomics">
        <title>An enzyme assisted RP-RPLC approach for in-depth analysis of human liver phosphoproteome.</title>
        <authorList>
            <person name="Bian Y."/>
            <person name="Song C."/>
            <person name="Cheng K."/>
            <person name="Dong M."/>
            <person name="Wang F."/>
            <person name="Huang J."/>
            <person name="Sun D."/>
            <person name="Wang L."/>
            <person name="Ye M."/>
            <person name="Zou H."/>
        </authorList>
    </citation>
    <scope>IDENTIFICATION BY MASS SPECTROMETRY [LARGE SCALE ANALYSIS]</scope>
    <source>
        <tissue>Liver</tissue>
    </source>
</reference>
<reference key="8">
    <citation type="journal article" date="2020" name="Mol. Biol. Cell">
        <title>Phosphorylation of multiple proteins involved in ciliogenesis by Tau Tubulin kinase 2.</title>
        <authorList>
            <person name="Bernatik O."/>
            <person name="Pejskova P."/>
            <person name="Vyslouzil D."/>
            <person name="Hanakova K."/>
            <person name="Zdrahal Z."/>
            <person name="Cajanek L."/>
        </authorList>
    </citation>
    <scope>PHOSPHORYLATION AT SER-209</scope>
</reference>
<reference key="9">
    <citation type="journal article" date="2020" name="Nat. Commun.">
        <title>Identification of interferon-stimulated genes that attenuate Ebola virus infection.</title>
        <authorList>
            <person name="Kuroda M."/>
            <person name="Halfmann P.J."/>
            <person name="Hill-Batorski L."/>
            <person name="Ozawa M."/>
            <person name="Lopes T.J.S."/>
            <person name="Neumann G."/>
            <person name="Schoggins J.W."/>
            <person name="Rice C.M."/>
            <person name="Kawaoka Y."/>
        </authorList>
    </citation>
    <scope>FUNCTION</scope>
    <scope>INDUCTION BY INTERFERON</scope>
    <scope>INTERACTION WITH EBOLAVIRUS PROTEIN NP (MICROBIAL INFECTION)</scope>
    <scope>SUBCELLULAR LOCATION</scope>
</reference>
<feature type="chain" id="PRO_0000274500" description="Coiled-coil domain-containing protein 92">
    <location>
        <begin position="1"/>
        <end position="331"/>
    </location>
</feature>
<feature type="region of interest" description="Disordered" evidence="2">
    <location>
        <begin position="171"/>
        <end position="212"/>
    </location>
</feature>
<feature type="coiled-coil region" evidence="1">
    <location>
        <begin position="18"/>
        <end position="44"/>
    </location>
</feature>
<feature type="coiled-coil region" evidence="1">
    <location>
        <begin position="76"/>
        <end position="152"/>
    </location>
</feature>
<feature type="compositionally biased region" description="Low complexity" evidence="2">
    <location>
        <begin position="171"/>
        <end position="184"/>
    </location>
</feature>
<feature type="compositionally biased region" description="Basic and acidic residues" evidence="2">
    <location>
        <begin position="193"/>
        <end position="203"/>
    </location>
</feature>
<feature type="modified residue" description="Phosphoserine" evidence="4">
    <location>
        <position position="209"/>
    </location>
</feature>
<feature type="splice variant" id="VSP_056906" description="In isoform 2." evidence="7">
    <location>
        <begin position="1"/>
        <end position="17"/>
    </location>
</feature>
<feature type="sequence variant" id="VAR_030301" description="In dbSNP:rs11057401.">
    <original>S</original>
    <variation>C</variation>
    <location>
        <position position="70"/>
    </location>
</feature>
<feature type="sequence variant" id="VAR_050765" description="In dbSNP:rs35935939." evidence="6">
    <original>A</original>
    <variation>T</variation>
    <location>
        <position position="253"/>
    </location>
</feature>
<feature type="sequence variant" id="VAR_030302" description="In dbSNP:rs17886730.">
    <original>R</original>
    <variation>H</variation>
    <location>
        <position position="281"/>
    </location>
</feature>
<organism>
    <name type="scientific">Homo sapiens</name>
    <name type="common">Human</name>
    <dbReference type="NCBI Taxonomy" id="9606"/>
    <lineage>
        <taxon>Eukaryota</taxon>
        <taxon>Metazoa</taxon>
        <taxon>Chordata</taxon>
        <taxon>Craniata</taxon>
        <taxon>Vertebrata</taxon>
        <taxon>Euteleostomi</taxon>
        <taxon>Mammalia</taxon>
        <taxon>Eutheria</taxon>
        <taxon>Euarchontoglires</taxon>
        <taxon>Primates</taxon>
        <taxon>Haplorrhini</taxon>
        <taxon>Catarrhini</taxon>
        <taxon>Hominidae</taxon>
        <taxon>Homo</taxon>
    </lineage>
</organism>
<proteinExistence type="evidence at protein level"/>
<protein>
    <recommendedName>
        <fullName>Coiled-coil domain-containing protein 92</fullName>
    </recommendedName>
    <alternativeName>
        <fullName>Limkain beta-2</fullName>
    </alternativeName>
</protein>